<sequence length="218" mass="23985">MSIAVLRFPGTNCEFDMLHSFKLLGVESHLVWHQEKELPKGTHLVVIPGGFSYGDYLRSGAIARFSPIMQAVIRYAKEGGKVLGICNGFQILVESGLLPGALRRNENLHFVSKFQKLAVVSNNNPFLREYAVSETLNIPIAHADGNYFIDAKGLEELKENDQILLTYQGENPNGSIESIAGVCNKEKSVFGLMPHPERAMEPLLGSVDGARMLRGLAC</sequence>
<accession>Q7M9X7</accession>
<keyword id="KW-0067">ATP-binding</keyword>
<keyword id="KW-0963">Cytoplasm</keyword>
<keyword id="KW-0315">Glutamine amidotransferase</keyword>
<keyword id="KW-0378">Hydrolase</keyword>
<keyword id="KW-0436">Ligase</keyword>
<keyword id="KW-0547">Nucleotide-binding</keyword>
<keyword id="KW-0658">Purine biosynthesis</keyword>
<keyword id="KW-1185">Reference proteome</keyword>
<protein>
    <recommendedName>
        <fullName evidence="1">Phosphoribosylformylglycinamidine synthase subunit PurQ</fullName>
        <shortName evidence="1">FGAM synthase</shortName>
        <ecNumber evidence="1">6.3.5.3</ecNumber>
    </recommendedName>
    <alternativeName>
        <fullName evidence="1">Formylglycinamide ribonucleotide amidotransferase subunit I</fullName>
        <shortName evidence="1">FGAR amidotransferase I</shortName>
        <shortName evidence="1">FGAR-AT I</shortName>
    </alternativeName>
    <alternativeName>
        <fullName evidence="1">Glutaminase PurQ</fullName>
        <ecNumber evidence="1">3.5.1.2</ecNumber>
    </alternativeName>
    <alternativeName>
        <fullName evidence="1">Phosphoribosylformylglycinamidine synthase subunit I</fullName>
    </alternativeName>
</protein>
<dbReference type="EC" id="6.3.5.3" evidence="1"/>
<dbReference type="EC" id="3.5.1.2" evidence="1"/>
<dbReference type="EMBL" id="BX571658">
    <property type="protein sequence ID" value="CAE09736.1"/>
    <property type="molecule type" value="Genomic_DNA"/>
</dbReference>
<dbReference type="RefSeq" id="WP_011138536.1">
    <property type="nucleotide sequence ID" value="NC_005090.1"/>
</dbReference>
<dbReference type="SMR" id="Q7M9X7"/>
<dbReference type="STRING" id="273121.WS0605"/>
<dbReference type="KEGG" id="wsu:WS0605"/>
<dbReference type="eggNOG" id="COG0047">
    <property type="taxonomic scope" value="Bacteria"/>
</dbReference>
<dbReference type="HOGENOM" id="CLU_001031_3_1_7"/>
<dbReference type="UniPathway" id="UPA00074">
    <property type="reaction ID" value="UER00128"/>
</dbReference>
<dbReference type="Proteomes" id="UP000000422">
    <property type="component" value="Chromosome"/>
</dbReference>
<dbReference type="GO" id="GO:0005737">
    <property type="term" value="C:cytoplasm"/>
    <property type="evidence" value="ECO:0007669"/>
    <property type="project" value="UniProtKB-SubCell"/>
</dbReference>
<dbReference type="GO" id="GO:0005524">
    <property type="term" value="F:ATP binding"/>
    <property type="evidence" value="ECO:0007669"/>
    <property type="project" value="UniProtKB-KW"/>
</dbReference>
<dbReference type="GO" id="GO:0004359">
    <property type="term" value="F:glutaminase activity"/>
    <property type="evidence" value="ECO:0007669"/>
    <property type="project" value="UniProtKB-EC"/>
</dbReference>
<dbReference type="GO" id="GO:0004642">
    <property type="term" value="F:phosphoribosylformylglycinamidine synthase activity"/>
    <property type="evidence" value="ECO:0007669"/>
    <property type="project" value="UniProtKB-UniRule"/>
</dbReference>
<dbReference type="GO" id="GO:0006189">
    <property type="term" value="P:'de novo' IMP biosynthetic process"/>
    <property type="evidence" value="ECO:0007669"/>
    <property type="project" value="UniProtKB-UniRule"/>
</dbReference>
<dbReference type="CDD" id="cd01740">
    <property type="entry name" value="GATase1_FGAR_AT"/>
    <property type="match status" value="1"/>
</dbReference>
<dbReference type="Gene3D" id="3.40.50.880">
    <property type="match status" value="1"/>
</dbReference>
<dbReference type="HAMAP" id="MF_00421">
    <property type="entry name" value="PurQ"/>
    <property type="match status" value="1"/>
</dbReference>
<dbReference type="InterPro" id="IPR029062">
    <property type="entry name" value="Class_I_gatase-like"/>
</dbReference>
<dbReference type="InterPro" id="IPR010075">
    <property type="entry name" value="PRibForGlyAmidine_synth_PurQ"/>
</dbReference>
<dbReference type="NCBIfam" id="TIGR01737">
    <property type="entry name" value="FGAM_synth_I"/>
    <property type="match status" value="1"/>
</dbReference>
<dbReference type="NCBIfam" id="NF002957">
    <property type="entry name" value="PRK03619.1"/>
    <property type="match status" value="1"/>
</dbReference>
<dbReference type="PANTHER" id="PTHR47552">
    <property type="entry name" value="PHOSPHORIBOSYLFORMYLGLYCINAMIDINE SYNTHASE SUBUNIT PURQ"/>
    <property type="match status" value="1"/>
</dbReference>
<dbReference type="PANTHER" id="PTHR47552:SF1">
    <property type="entry name" value="PHOSPHORIBOSYLFORMYLGLYCINAMIDINE SYNTHASE SUBUNIT PURQ"/>
    <property type="match status" value="1"/>
</dbReference>
<dbReference type="Pfam" id="PF13507">
    <property type="entry name" value="GATase_5"/>
    <property type="match status" value="1"/>
</dbReference>
<dbReference type="PIRSF" id="PIRSF001586">
    <property type="entry name" value="FGAM_synth_I"/>
    <property type="match status" value="1"/>
</dbReference>
<dbReference type="SMART" id="SM01211">
    <property type="entry name" value="GATase_5"/>
    <property type="match status" value="1"/>
</dbReference>
<dbReference type="SUPFAM" id="SSF52317">
    <property type="entry name" value="Class I glutamine amidotransferase-like"/>
    <property type="match status" value="1"/>
</dbReference>
<dbReference type="PROSITE" id="PS51273">
    <property type="entry name" value="GATASE_TYPE_1"/>
    <property type="match status" value="1"/>
</dbReference>
<proteinExistence type="inferred from homology"/>
<feature type="chain" id="PRO_0000100603" description="Phosphoribosylformylglycinamidine synthase subunit PurQ">
    <location>
        <begin position="1"/>
        <end position="218"/>
    </location>
</feature>
<feature type="domain" description="Glutamine amidotransferase type-1" evidence="1">
    <location>
        <begin position="2"/>
        <end position="218"/>
    </location>
</feature>
<feature type="active site" description="Nucleophile" evidence="1">
    <location>
        <position position="86"/>
    </location>
</feature>
<feature type="active site" evidence="1">
    <location>
        <position position="195"/>
    </location>
</feature>
<feature type="active site" evidence="1">
    <location>
        <position position="197"/>
    </location>
</feature>
<evidence type="ECO:0000255" key="1">
    <source>
        <dbReference type="HAMAP-Rule" id="MF_00421"/>
    </source>
</evidence>
<comment type="function">
    <text evidence="1">Part of the phosphoribosylformylglycinamidine synthase complex involved in the purines biosynthetic pathway. Catalyzes the ATP-dependent conversion of formylglycinamide ribonucleotide (FGAR) and glutamine to yield formylglycinamidine ribonucleotide (FGAM) and glutamate. The FGAM synthase complex is composed of three subunits. PurQ produces an ammonia molecule by converting glutamine to glutamate. PurL transfers the ammonia molecule to FGAR to form FGAM in an ATP-dependent manner. PurS interacts with PurQ and PurL and is thought to assist in the transfer of the ammonia molecule from PurQ to PurL.</text>
</comment>
<comment type="catalytic activity">
    <reaction evidence="1">
        <text>N(2)-formyl-N(1)-(5-phospho-beta-D-ribosyl)glycinamide + L-glutamine + ATP + H2O = 2-formamido-N(1)-(5-O-phospho-beta-D-ribosyl)acetamidine + L-glutamate + ADP + phosphate + H(+)</text>
        <dbReference type="Rhea" id="RHEA:17129"/>
        <dbReference type="ChEBI" id="CHEBI:15377"/>
        <dbReference type="ChEBI" id="CHEBI:15378"/>
        <dbReference type="ChEBI" id="CHEBI:29985"/>
        <dbReference type="ChEBI" id="CHEBI:30616"/>
        <dbReference type="ChEBI" id="CHEBI:43474"/>
        <dbReference type="ChEBI" id="CHEBI:58359"/>
        <dbReference type="ChEBI" id="CHEBI:147286"/>
        <dbReference type="ChEBI" id="CHEBI:147287"/>
        <dbReference type="ChEBI" id="CHEBI:456216"/>
        <dbReference type="EC" id="6.3.5.3"/>
    </reaction>
</comment>
<comment type="catalytic activity">
    <reaction evidence="1">
        <text>L-glutamine + H2O = L-glutamate + NH4(+)</text>
        <dbReference type="Rhea" id="RHEA:15889"/>
        <dbReference type="ChEBI" id="CHEBI:15377"/>
        <dbReference type="ChEBI" id="CHEBI:28938"/>
        <dbReference type="ChEBI" id="CHEBI:29985"/>
        <dbReference type="ChEBI" id="CHEBI:58359"/>
        <dbReference type="EC" id="3.5.1.2"/>
    </reaction>
</comment>
<comment type="pathway">
    <text evidence="1">Purine metabolism; IMP biosynthesis via de novo pathway; 5-amino-1-(5-phospho-D-ribosyl)imidazole from N(2)-formyl-N(1)-(5-phospho-D-ribosyl)glycinamide: step 1/2.</text>
</comment>
<comment type="subunit">
    <text evidence="1">Part of the FGAM synthase complex composed of 1 PurL, 1 PurQ and 2 PurS subunits.</text>
</comment>
<comment type="subcellular location">
    <subcellularLocation>
        <location evidence="1">Cytoplasm</location>
    </subcellularLocation>
</comment>
<gene>
    <name evidence="1" type="primary">purQ</name>
    <name type="ordered locus">WS0605</name>
</gene>
<reference key="1">
    <citation type="journal article" date="2003" name="Proc. Natl. Acad. Sci. U.S.A.">
        <title>Complete genome sequence and analysis of Wolinella succinogenes.</title>
        <authorList>
            <person name="Baar C."/>
            <person name="Eppinger M."/>
            <person name="Raddatz G."/>
            <person name="Simon J."/>
            <person name="Lanz C."/>
            <person name="Klimmek O."/>
            <person name="Nandakumar R."/>
            <person name="Gross R."/>
            <person name="Rosinus A."/>
            <person name="Keller H."/>
            <person name="Jagtap P."/>
            <person name="Linke B."/>
            <person name="Meyer F."/>
            <person name="Lederer H."/>
            <person name="Schuster S.C."/>
        </authorList>
    </citation>
    <scope>NUCLEOTIDE SEQUENCE [LARGE SCALE GENOMIC DNA]</scope>
    <source>
        <strain>ATCC 29543 / DSM 1740 / CCUG 13145 / JCM 31913 / LMG 7466 / NCTC 11488 / FDC 602W</strain>
    </source>
</reference>
<organism>
    <name type="scientific">Wolinella succinogenes (strain ATCC 29543 / DSM 1740 / CCUG 13145 / JCM 31913 / LMG 7466 / NCTC 11488 / FDC 602W)</name>
    <name type="common">Vibrio succinogenes</name>
    <dbReference type="NCBI Taxonomy" id="273121"/>
    <lineage>
        <taxon>Bacteria</taxon>
        <taxon>Pseudomonadati</taxon>
        <taxon>Campylobacterota</taxon>
        <taxon>Epsilonproteobacteria</taxon>
        <taxon>Campylobacterales</taxon>
        <taxon>Helicobacteraceae</taxon>
        <taxon>Wolinella</taxon>
    </lineage>
</organism>
<name>PURQ_WOLSU</name>